<proteinExistence type="evidence at protein level"/>
<organism>
    <name type="scientific">Proteus mirabilis</name>
    <dbReference type="NCBI Taxonomy" id="584"/>
    <lineage>
        <taxon>Bacteria</taxon>
        <taxon>Pseudomonadati</taxon>
        <taxon>Pseudomonadota</taxon>
        <taxon>Gammaproteobacteria</taxon>
        <taxon>Enterobacterales</taxon>
        <taxon>Morganellaceae</taxon>
        <taxon>Proteus</taxon>
    </lineage>
</organism>
<reference key="1">
    <citation type="journal article" date="1994" name="Gene">
        <title>Sequence and genetic analysis of multiple flagellin-encoding genes from Proteus mirabilis.</title>
        <authorList>
            <person name="Belas R."/>
            <person name="Flaherty D."/>
        </authorList>
    </citation>
    <scope>NUCLEOTIDE SEQUENCE [GENOMIC DNA]</scope>
    <scope>PROTEIN SEQUENCE OF 2-29</scope>
    <source>
        <strain>BB2000</strain>
    </source>
</reference>
<reference key="2">
    <citation type="journal article" date="1991" name="Infect. Immun.">
        <title>Proteus mirabilis flagella and MR/P fimbriae: isolation, purification, N-terminal analysis, and serum antibody response following experimental urinary tract infection.</title>
        <authorList>
            <person name="Bahrani F.K."/>
            <person name="Johnson D.E."/>
            <person name="Robbins D."/>
            <person name="Mobley H.L."/>
        </authorList>
    </citation>
    <scope>PROTEIN SEQUENCE OF 2-21</scope>
</reference>
<accession>P42272</accession>
<comment type="function">
    <text>Flagellin is the subunit protein which polymerizes to form the filaments of bacterial flagella.</text>
</comment>
<comment type="subcellular location">
    <subcellularLocation>
        <location>Secreted</location>
    </subcellularLocation>
    <subcellularLocation>
        <location>Bacterial flagellum</location>
    </subcellularLocation>
</comment>
<comment type="induction">
    <text>Although swimmer cells have only a few flagella, the elongated swarmer cells are profusely covered by thousands of new flagella synthesized specifically in response to growth on surfaces or in highly viscous liquids.</text>
</comment>
<comment type="similarity">
    <text evidence="3">Belongs to the bacterial flagellin family.</text>
</comment>
<name>FLIC1_PROMI</name>
<sequence length="365" mass="39094">MAQVINTNYLSLVTQNNLNKSQGTLGSAIERLSSGLRINSAKDDAAGQAIANRFTSNVNGLTQASRNANDGISIAQTTEGALNEINNNLQRIRELTVQAKNGTNSNSDITSIQNEVKNVLDEINRISEQTQFNGVKVLSGEKSEMVIQVGTNDNETIKFNLDKVDNDTLGVASDKLFDTKTEKKGVTAAGAGVTDAKKINAAATLDMMVSLVKEFNLDGKPVTDKFIVTKGGKDYVATKSDFELDATGTKLGLKASATTEFKVDAGKDVKTLNVKDDALATLDKAINTIDESRSKLGAIQNRFESTINNLNNTVNNLSASRSRILDADYATEVSNMSRGQILQQAGTSVLAQANQVPQTVLSLLR</sequence>
<keyword id="KW-0975">Bacterial flagellum</keyword>
<keyword id="KW-0903">Direct protein sequencing</keyword>
<keyword id="KW-0964">Secreted</keyword>
<dbReference type="EMBL" id="AF221596">
    <property type="protein sequence ID" value="AAA62396.1"/>
    <property type="molecule type" value="Genomic_DNA"/>
</dbReference>
<dbReference type="PIR" id="JC2559">
    <property type="entry name" value="JC2559"/>
</dbReference>
<dbReference type="SMR" id="P42272"/>
<dbReference type="STRING" id="584.AOUC001_07460"/>
<dbReference type="GO" id="GO:0009288">
    <property type="term" value="C:bacterial-type flagellum"/>
    <property type="evidence" value="ECO:0007669"/>
    <property type="project" value="UniProtKB-SubCell"/>
</dbReference>
<dbReference type="GO" id="GO:0005576">
    <property type="term" value="C:extracellular region"/>
    <property type="evidence" value="ECO:0007669"/>
    <property type="project" value="UniProtKB-SubCell"/>
</dbReference>
<dbReference type="GO" id="GO:0005198">
    <property type="term" value="F:structural molecule activity"/>
    <property type="evidence" value="ECO:0007669"/>
    <property type="project" value="InterPro"/>
</dbReference>
<dbReference type="Gene3D" id="2.60.40.4390">
    <property type="match status" value="1"/>
</dbReference>
<dbReference type="Gene3D" id="6.10.280.190">
    <property type="match status" value="1"/>
</dbReference>
<dbReference type="Gene3D" id="1.20.1330.10">
    <property type="entry name" value="f41 fragment of flagellin, N-terminal domain"/>
    <property type="match status" value="1"/>
</dbReference>
<dbReference type="Gene3D" id="6.10.10.10">
    <property type="entry name" value="Flagellar export chaperone, C-terminal domain"/>
    <property type="match status" value="1"/>
</dbReference>
<dbReference type="InterPro" id="IPR001492">
    <property type="entry name" value="Flagellin"/>
</dbReference>
<dbReference type="InterPro" id="IPR046358">
    <property type="entry name" value="Flagellin_C"/>
</dbReference>
<dbReference type="InterPro" id="IPR042187">
    <property type="entry name" value="Flagellin_C_sub2"/>
</dbReference>
<dbReference type="InterPro" id="IPR001029">
    <property type="entry name" value="Flagellin_N"/>
</dbReference>
<dbReference type="NCBIfam" id="NF005294">
    <property type="entry name" value="PRK06819.1"/>
    <property type="match status" value="1"/>
</dbReference>
<dbReference type="PANTHER" id="PTHR42792">
    <property type="entry name" value="FLAGELLIN"/>
    <property type="match status" value="1"/>
</dbReference>
<dbReference type="PANTHER" id="PTHR42792:SF2">
    <property type="entry name" value="FLAGELLIN"/>
    <property type="match status" value="1"/>
</dbReference>
<dbReference type="Pfam" id="PF00700">
    <property type="entry name" value="Flagellin_C"/>
    <property type="match status" value="1"/>
</dbReference>
<dbReference type="Pfam" id="PF00669">
    <property type="entry name" value="Flagellin_N"/>
    <property type="match status" value="1"/>
</dbReference>
<dbReference type="PRINTS" id="PR00207">
    <property type="entry name" value="FLAGELLIN"/>
</dbReference>
<dbReference type="SUPFAM" id="SSF64518">
    <property type="entry name" value="Phase 1 flagellin"/>
    <property type="match status" value="1"/>
</dbReference>
<feature type="initiator methionine" description="Removed" evidence="1 2">
    <location>
        <position position="1"/>
    </location>
</feature>
<feature type="chain" id="PRO_0000182561" description="Flagellin 1">
    <location>
        <begin position="2"/>
        <end position="365"/>
    </location>
</feature>
<gene>
    <name type="primary">fliC1</name>
</gene>
<protein>
    <recommendedName>
        <fullName>Flagellin 1</fullName>
    </recommendedName>
</protein>
<evidence type="ECO:0000269" key="1">
    <source>
    </source>
</evidence>
<evidence type="ECO:0000269" key="2">
    <source>
    </source>
</evidence>
<evidence type="ECO:0000305" key="3"/>